<gene>
    <name type="ordered locus">MIMI_R50</name>
</gene>
<sequence length="113" mass="12912">MTMFIVSWTGLPRHFLKKKGGMNLDHGILKDEYIVIEDINICVFAPDKINALLNAIQHFCNLDENEDYLLSKNIDTTLEILKKMNPTVTALNDGVVFQFKEASSIMYKGFNIE</sequence>
<accession>Q5UPC2</accession>
<name>YR050_MIMIV</name>
<dbReference type="EMBL" id="AY653733">
    <property type="protein sequence ID" value="AAV50325.1"/>
    <property type="molecule type" value="Genomic_DNA"/>
</dbReference>
<dbReference type="KEGG" id="vg:9924638"/>
<dbReference type="OrthoDB" id="20295at10239"/>
<dbReference type="Proteomes" id="UP000001134">
    <property type="component" value="Genome"/>
</dbReference>
<organism>
    <name type="scientific">Acanthamoeba polyphaga mimivirus</name>
    <name type="common">APMV</name>
    <dbReference type="NCBI Taxonomy" id="212035"/>
    <lineage>
        <taxon>Viruses</taxon>
        <taxon>Varidnaviria</taxon>
        <taxon>Bamfordvirae</taxon>
        <taxon>Nucleocytoviricota</taxon>
        <taxon>Megaviricetes</taxon>
        <taxon>Imitervirales</taxon>
        <taxon>Mimiviridae</taxon>
        <taxon>Megamimivirinae</taxon>
        <taxon>Mimivirus</taxon>
        <taxon>Mimivirus bradfordmassiliense</taxon>
    </lineage>
</organism>
<proteinExistence type="predicted"/>
<feature type="chain" id="PRO_0000071191" description="Uncharacterized protein R50">
    <location>
        <begin position="1"/>
        <end position="113"/>
    </location>
</feature>
<reference key="1">
    <citation type="journal article" date="2004" name="Science">
        <title>The 1.2-megabase genome sequence of Mimivirus.</title>
        <authorList>
            <person name="Raoult D."/>
            <person name="Audic S."/>
            <person name="Robert C."/>
            <person name="Abergel C."/>
            <person name="Renesto P."/>
            <person name="Ogata H."/>
            <person name="La Scola B."/>
            <person name="Susan M."/>
            <person name="Claverie J.-M."/>
        </authorList>
    </citation>
    <scope>NUCLEOTIDE SEQUENCE [LARGE SCALE GENOMIC DNA]</scope>
    <source>
        <strain>Rowbotham-Bradford</strain>
    </source>
</reference>
<keyword id="KW-1185">Reference proteome</keyword>
<organismHost>
    <name type="scientific">Acanthamoeba polyphaga</name>
    <name type="common">Amoeba</name>
    <dbReference type="NCBI Taxonomy" id="5757"/>
</organismHost>
<protein>
    <recommendedName>
        <fullName>Uncharacterized protein R50</fullName>
    </recommendedName>
</protein>